<comment type="function">
    <text evidence="1">Catalyzes the rearrangement of 1-deoxy-D-xylulose 5-phosphate (DXP) to produce the thiazole phosphate moiety of thiamine. Sulfur is provided by the thiocarboxylate moiety of the carrier protein ThiS. In vitro, sulfur can be provided by H(2)S.</text>
</comment>
<comment type="catalytic activity">
    <reaction evidence="1">
        <text>[ThiS sulfur-carrier protein]-C-terminal-Gly-aminoethanethioate + 2-iminoacetate + 1-deoxy-D-xylulose 5-phosphate = [ThiS sulfur-carrier protein]-C-terminal Gly-Gly + 2-[(2R,5Z)-2-carboxy-4-methylthiazol-5(2H)-ylidene]ethyl phosphate + 2 H2O + H(+)</text>
        <dbReference type="Rhea" id="RHEA:26297"/>
        <dbReference type="Rhea" id="RHEA-COMP:12909"/>
        <dbReference type="Rhea" id="RHEA-COMP:19908"/>
        <dbReference type="ChEBI" id="CHEBI:15377"/>
        <dbReference type="ChEBI" id="CHEBI:15378"/>
        <dbReference type="ChEBI" id="CHEBI:57792"/>
        <dbReference type="ChEBI" id="CHEBI:62899"/>
        <dbReference type="ChEBI" id="CHEBI:77846"/>
        <dbReference type="ChEBI" id="CHEBI:90778"/>
        <dbReference type="ChEBI" id="CHEBI:232372"/>
        <dbReference type="EC" id="2.8.1.10"/>
    </reaction>
</comment>
<comment type="pathway">
    <text evidence="1">Cofactor biosynthesis; thiamine diphosphate biosynthesis.</text>
</comment>
<comment type="subunit">
    <text evidence="1">Homotetramer. Forms heterodimers with either ThiH or ThiS.</text>
</comment>
<comment type="subcellular location">
    <subcellularLocation>
        <location evidence="1">Cytoplasm</location>
    </subcellularLocation>
</comment>
<comment type="similarity">
    <text evidence="1">Belongs to the ThiG family.</text>
</comment>
<keyword id="KW-0963">Cytoplasm</keyword>
<keyword id="KW-0704">Schiff base</keyword>
<keyword id="KW-0784">Thiamine biosynthesis</keyword>
<keyword id="KW-0808">Transferase</keyword>
<evidence type="ECO:0000255" key="1">
    <source>
        <dbReference type="HAMAP-Rule" id="MF_00443"/>
    </source>
</evidence>
<reference key="1">
    <citation type="submission" date="2007-11" db="EMBL/GenBank/DDBJ databases">
        <title>Genome sequencing of phylogenetically and phenotypically diverse Coxiella burnetii isolates.</title>
        <authorList>
            <person name="Seshadri R."/>
            <person name="Samuel J.E."/>
        </authorList>
    </citation>
    <scope>NUCLEOTIDE SEQUENCE [LARGE SCALE GENOMIC DNA]</scope>
    <source>
        <strain>RSA 331 / Henzerling II</strain>
    </source>
</reference>
<proteinExistence type="inferred from homology"/>
<name>THIG_COXBR</name>
<organism>
    <name type="scientific">Coxiella burnetii (strain RSA 331 / Henzerling II)</name>
    <dbReference type="NCBI Taxonomy" id="360115"/>
    <lineage>
        <taxon>Bacteria</taxon>
        <taxon>Pseudomonadati</taxon>
        <taxon>Pseudomonadota</taxon>
        <taxon>Gammaproteobacteria</taxon>
        <taxon>Legionellales</taxon>
        <taxon>Coxiellaceae</taxon>
        <taxon>Coxiella</taxon>
    </lineage>
</organism>
<gene>
    <name evidence="1" type="primary">thiG</name>
    <name type="ordered locus">COXBURSA331_A0440</name>
</gene>
<accession>A9NB65</accession>
<dbReference type="EC" id="2.8.1.10" evidence="1"/>
<dbReference type="EMBL" id="CP000890">
    <property type="protein sequence ID" value="ABX78015.1"/>
    <property type="molecule type" value="Genomic_DNA"/>
</dbReference>
<dbReference type="RefSeq" id="WP_010957509.1">
    <property type="nucleotide sequence ID" value="NC_010117.1"/>
</dbReference>
<dbReference type="SMR" id="A9NB65"/>
<dbReference type="KEGG" id="cbs:COXBURSA331_A0440"/>
<dbReference type="HOGENOM" id="CLU_062233_1_0_6"/>
<dbReference type="UniPathway" id="UPA00060"/>
<dbReference type="GO" id="GO:0005737">
    <property type="term" value="C:cytoplasm"/>
    <property type="evidence" value="ECO:0007669"/>
    <property type="project" value="UniProtKB-SubCell"/>
</dbReference>
<dbReference type="GO" id="GO:1990107">
    <property type="term" value="F:thiazole synthase activity"/>
    <property type="evidence" value="ECO:0007669"/>
    <property type="project" value="UniProtKB-EC"/>
</dbReference>
<dbReference type="GO" id="GO:0009229">
    <property type="term" value="P:thiamine diphosphate biosynthetic process"/>
    <property type="evidence" value="ECO:0007669"/>
    <property type="project" value="UniProtKB-UniRule"/>
</dbReference>
<dbReference type="CDD" id="cd04728">
    <property type="entry name" value="ThiG"/>
    <property type="match status" value="1"/>
</dbReference>
<dbReference type="FunFam" id="3.20.20.70:FF:000378">
    <property type="entry name" value="Thiazole synthase"/>
    <property type="match status" value="1"/>
</dbReference>
<dbReference type="Gene3D" id="3.20.20.70">
    <property type="entry name" value="Aldolase class I"/>
    <property type="match status" value="1"/>
</dbReference>
<dbReference type="HAMAP" id="MF_00443">
    <property type="entry name" value="ThiG"/>
    <property type="match status" value="1"/>
</dbReference>
<dbReference type="InterPro" id="IPR013785">
    <property type="entry name" value="Aldolase_TIM"/>
</dbReference>
<dbReference type="InterPro" id="IPR033983">
    <property type="entry name" value="Thiazole_synthase_ThiG"/>
</dbReference>
<dbReference type="InterPro" id="IPR008867">
    <property type="entry name" value="ThiG"/>
</dbReference>
<dbReference type="PANTHER" id="PTHR34266">
    <property type="entry name" value="THIAZOLE SYNTHASE"/>
    <property type="match status" value="1"/>
</dbReference>
<dbReference type="PANTHER" id="PTHR34266:SF2">
    <property type="entry name" value="THIAZOLE SYNTHASE"/>
    <property type="match status" value="1"/>
</dbReference>
<dbReference type="Pfam" id="PF05690">
    <property type="entry name" value="ThiG"/>
    <property type="match status" value="1"/>
</dbReference>
<dbReference type="SUPFAM" id="SSF110399">
    <property type="entry name" value="ThiG-like"/>
    <property type="match status" value="1"/>
</dbReference>
<feature type="chain" id="PRO_1000196851" description="Thiazole synthase">
    <location>
        <begin position="1"/>
        <end position="259"/>
    </location>
</feature>
<feature type="active site" description="Schiff-base intermediate with DXP" evidence="1">
    <location>
        <position position="95"/>
    </location>
</feature>
<feature type="binding site" evidence="1">
    <location>
        <position position="156"/>
    </location>
    <ligand>
        <name>1-deoxy-D-xylulose 5-phosphate</name>
        <dbReference type="ChEBI" id="CHEBI:57792"/>
    </ligand>
</feature>
<feature type="binding site" evidence="1">
    <location>
        <begin position="183"/>
        <end position="184"/>
    </location>
    <ligand>
        <name>1-deoxy-D-xylulose 5-phosphate</name>
        <dbReference type="ChEBI" id="CHEBI:57792"/>
    </ligand>
</feature>
<feature type="binding site" evidence="1">
    <location>
        <begin position="205"/>
        <end position="206"/>
    </location>
    <ligand>
        <name>1-deoxy-D-xylulose 5-phosphate</name>
        <dbReference type="ChEBI" id="CHEBI:57792"/>
    </ligand>
</feature>
<protein>
    <recommendedName>
        <fullName evidence="1">Thiazole synthase</fullName>
        <ecNumber evidence="1">2.8.1.10</ecNumber>
    </recommendedName>
</protein>
<sequence length="259" mass="28193">MWAIGGVQLNSRLLLGTAQYPSPQLMSDAVKAAGVEIITVSLRRQLSPQKENYFWDLLRSLPCHLLPNTAGCSSVKEAVNTARAARELFNTHWIKLEIIGDEYTLQPNPFELVNAATILVKEGFEVFPYCTEDLILCQRLVDAGCRVLMPWAAPIGSGRGLMNTYALQVLRERFPKNILIIDAGLGRPSHAAQVMEMGFDAVLLNSAVALAMDPVVMAAGFAKAVEGGRLGYEGGMIKARNVAKATTPLIGKPFLIEKP</sequence>